<proteinExistence type="inferred from homology"/>
<evidence type="ECO:0000250" key="1">
    <source>
        <dbReference type="UniProtKB" id="P50389"/>
    </source>
</evidence>
<evidence type="ECO:0000255" key="2">
    <source>
        <dbReference type="HAMAP-Rule" id="MF_01627"/>
    </source>
</evidence>
<dbReference type="EC" id="2.4.2.1" evidence="2"/>
<dbReference type="EMBL" id="CP000606">
    <property type="protein sequence ID" value="ABO24678.1"/>
    <property type="molecule type" value="Genomic_DNA"/>
</dbReference>
<dbReference type="RefSeq" id="WP_011866609.1">
    <property type="nucleotide sequence ID" value="NC_009092.1"/>
</dbReference>
<dbReference type="SMR" id="A3QGT0"/>
<dbReference type="STRING" id="323850.Shew_2812"/>
<dbReference type="KEGG" id="slo:Shew_2812"/>
<dbReference type="eggNOG" id="COG0813">
    <property type="taxonomic scope" value="Bacteria"/>
</dbReference>
<dbReference type="HOGENOM" id="CLU_068457_2_0_6"/>
<dbReference type="OrthoDB" id="9782889at2"/>
<dbReference type="Proteomes" id="UP000001558">
    <property type="component" value="Chromosome"/>
</dbReference>
<dbReference type="GO" id="GO:0005829">
    <property type="term" value="C:cytosol"/>
    <property type="evidence" value="ECO:0007669"/>
    <property type="project" value="TreeGrafter"/>
</dbReference>
<dbReference type="GO" id="GO:0004731">
    <property type="term" value="F:purine-nucleoside phosphorylase activity"/>
    <property type="evidence" value="ECO:0007669"/>
    <property type="project" value="UniProtKB-UniRule"/>
</dbReference>
<dbReference type="GO" id="GO:0006152">
    <property type="term" value="P:purine nucleoside catabolic process"/>
    <property type="evidence" value="ECO:0007669"/>
    <property type="project" value="TreeGrafter"/>
</dbReference>
<dbReference type="CDD" id="cd09006">
    <property type="entry name" value="PNP_EcPNPI-like"/>
    <property type="match status" value="1"/>
</dbReference>
<dbReference type="Gene3D" id="3.40.50.1580">
    <property type="entry name" value="Nucleoside phosphorylase domain"/>
    <property type="match status" value="1"/>
</dbReference>
<dbReference type="HAMAP" id="MF_01627">
    <property type="entry name" value="Pur_nucleosid_phosp"/>
    <property type="match status" value="1"/>
</dbReference>
<dbReference type="InterPro" id="IPR004402">
    <property type="entry name" value="DeoD-type"/>
</dbReference>
<dbReference type="InterPro" id="IPR018016">
    <property type="entry name" value="Nucleoside_phosphorylase_CS"/>
</dbReference>
<dbReference type="InterPro" id="IPR000845">
    <property type="entry name" value="Nucleoside_phosphorylase_d"/>
</dbReference>
<dbReference type="InterPro" id="IPR035994">
    <property type="entry name" value="Nucleoside_phosphorylase_sf"/>
</dbReference>
<dbReference type="NCBIfam" id="TIGR00107">
    <property type="entry name" value="deoD"/>
    <property type="match status" value="1"/>
</dbReference>
<dbReference type="NCBIfam" id="NF004489">
    <property type="entry name" value="PRK05819.1"/>
    <property type="match status" value="1"/>
</dbReference>
<dbReference type="NCBIfam" id="NF009914">
    <property type="entry name" value="PRK13374.1"/>
    <property type="match status" value="1"/>
</dbReference>
<dbReference type="PANTHER" id="PTHR43691:SF2">
    <property type="entry name" value="PURINE NUCLEOSIDE PHOSPHORYLASE DEOD-TYPE"/>
    <property type="match status" value="1"/>
</dbReference>
<dbReference type="PANTHER" id="PTHR43691">
    <property type="entry name" value="URIDINE PHOSPHORYLASE"/>
    <property type="match status" value="1"/>
</dbReference>
<dbReference type="Pfam" id="PF01048">
    <property type="entry name" value="PNP_UDP_1"/>
    <property type="match status" value="1"/>
</dbReference>
<dbReference type="SUPFAM" id="SSF53167">
    <property type="entry name" value="Purine and uridine phosphorylases"/>
    <property type="match status" value="1"/>
</dbReference>
<dbReference type="PROSITE" id="PS01232">
    <property type="entry name" value="PNP_UDP_1"/>
    <property type="match status" value="1"/>
</dbReference>
<gene>
    <name evidence="2" type="primary">deoD</name>
    <name type="ordered locus">Shew_2812</name>
</gene>
<keyword id="KW-0328">Glycosyltransferase</keyword>
<keyword id="KW-1185">Reference proteome</keyword>
<keyword id="KW-0808">Transferase</keyword>
<comment type="function">
    <text evidence="2">Catalyzes the reversible phosphorolytic breakdown of the N-glycosidic bond in the beta-(deoxy)ribonucleoside molecules, with the formation of the corresponding free purine bases and pentose-1-phosphate.</text>
</comment>
<comment type="catalytic activity">
    <reaction evidence="2">
        <text>a purine D-ribonucleoside + phosphate = a purine nucleobase + alpha-D-ribose 1-phosphate</text>
        <dbReference type="Rhea" id="RHEA:19805"/>
        <dbReference type="ChEBI" id="CHEBI:26386"/>
        <dbReference type="ChEBI" id="CHEBI:43474"/>
        <dbReference type="ChEBI" id="CHEBI:57720"/>
        <dbReference type="ChEBI" id="CHEBI:142355"/>
        <dbReference type="EC" id="2.4.2.1"/>
    </reaction>
</comment>
<comment type="catalytic activity">
    <reaction evidence="2">
        <text>a purine 2'-deoxy-D-ribonucleoside + phosphate = a purine nucleobase + 2-deoxy-alpha-D-ribose 1-phosphate</text>
        <dbReference type="Rhea" id="RHEA:36431"/>
        <dbReference type="ChEBI" id="CHEBI:26386"/>
        <dbReference type="ChEBI" id="CHEBI:43474"/>
        <dbReference type="ChEBI" id="CHEBI:57259"/>
        <dbReference type="ChEBI" id="CHEBI:142361"/>
        <dbReference type="EC" id="2.4.2.1"/>
    </reaction>
</comment>
<comment type="subunit">
    <text evidence="2">Homohexamer; trimer of homodimers.</text>
</comment>
<comment type="similarity">
    <text evidence="2">Belongs to the PNP/UDP phosphorylase family.</text>
</comment>
<sequence>MATPHINAVDGAFADTVLFPGDPLRAKYIAETFLENVEQVTDVRNMLGFTGTYKGVRISVMGSGMGIPSCSIYATELIKDYGVKNLIRVGTCGAISTDVKVRDVIIGMGACTDSQVNRLRFKGQDFAAICDYSLLSAVVKAAEEKGTKYRVGNVFSADLFYTPDPEMFDVMEKMDVLGVEMEAAGLYGVAKEFGAKALCVVTVSDHIRTGEKTSSDERQTTFNEMIEMTLEAAITL</sequence>
<organism>
    <name type="scientific">Shewanella loihica (strain ATCC BAA-1088 / PV-4)</name>
    <dbReference type="NCBI Taxonomy" id="323850"/>
    <lineage>
        <taxon>Bacteria</taxon>
        <taxon>Pseudomonadati</taxon>
        <taxon>Pseudomonadota</taxon>
        <taxon>Gammaproteobacteria</taxon>
        <taxon>Alteromonadales</taxon>
        <taxon>Shewanellaceae</taxon>
        <taxon>Shewanella</taxon>
    </lineage>
</organism>
<reference key="1">
    <citation type="submission" date="2007-03" db="EMBL/GenBank/DDBJ databases">
        <title>Complete sequence of Shewanella loihica PV-4.</title>
        <authorList>
            <consortium name="US DOE Joint Genome Institute"/>
            <person name="Copeland A."/>
            <person name="Lucas S."/>
            <person name="Lapidus A."/>
            <person name="Barry K."/>
            <person name="Detter J.C."/>
            <person name="Glavina del Rio T."/>
            <person name="Hammon N."/>
            <person name="Israni S."/>
            <person name="Dalin E."/>
            <person name="Tice H."/>
            <person name="Pitluck S."/>
            <person name="Chain P."/>
            <person name="Malfatti S."/>
            <person name="Shin M."/>
            <person name="Vergez L."/>
            <person name="Schmutz J."/>
            <person name="Larimer F."/>
            <person name="Land M."/>
            <person name="Hauser L."/>
            <person name="Kyrpides N."/>
            <person name="Mikhailova N."/>
            <person name="Romine M.F."/>
            <person name="Serres G."/>
            <person name="Fredrickson J."/>
            <person name="Tiedje J."/>
            <person name="Richardson P."/>
        </authorList>
    </citation>
    <scope>NUCLEOTIDE SEQUENCE [LARGE SCALE GENOMIC DNA]</scope>
    <source>
        <strain>ATCC BAA-1088 / PV-4</strain>
    </source>
</reference>
<name>DEOD_SHELP</name>
<feature type="chain" id="PRO_1000069645" description="Purine nucleoside phosphorylase DeoD-type">
    <location>
        <begin position="1"/>
        <end position="236"/>
    </location>
</feature>
<feature type="active site" description="Proton donor" evidence="2">
    <location>
        <position position="205"/>
    </location>
</feature>
<feature type="binding site" evidence="1">
    <location>
        <position position="5"/>
    </location>
    <ligand>
        <name>a purine D-ribonucleoside</name>
        <dbReference type="ChEBI" id="CHEBI:142355"/>
        <note>ligand shared between dimeric partners</note>
    </ligand>
</feature>
<feature type="binding site" description="in other chain" evidence="1">
    <location>
        <position position="21"/>
    </location>
    <ligand>
        <name>phosphate</name>
        <dbReference type="ChEBI" id="CHEBI:43474"/>
        <note>ligand shared between dimeric partners</note>
    </ligand>
</feature>
<feature type="binding site" description="in other chain" evidence="1">
    <location>
        <position position="25"/>
    </location>
    <ligand>
        <name>phosphate</name>
        <dbReference type="ChEBI" id="CHEBI:43474"/>
        <note>ligand shared between dimeric partners</note>
    </ligand>
</feature>
<feature type="binding site" evidence="1">
    <location>
        <position position="44"/>
    </location>
    <ligand>
        <name>phosphate</name>
        <dbReference type="ChEBI" id="CHEBI:43474"/>
        <note>ligand shared between dimeric partners</note>
    </ligand>
</feature>
<feature type="binding site" description="in other chain" evidence="1">
    <location>
        <begin position="88"/>
        <end position="91"/>
    </location>
    <ligand>
        <name>phosphate</name>
        <dbReference type="ChEBI" id="CHEBI:43474"/>
        <note>ligand shared between dimeric partners</note>
    </ligand>
</feature>
<feature type="binding site" description="in other chain" evidence="1">
    <location>
        <begin position="180"/>
        <end position="182"/>
    </location>
    <ligand>
        <name>a purine D-ribonucleoside</name>
        <dbReference type="ChEBI" id="CHEBI:142355"/>
        <note>ligand shared between dimeric partners</note>
    </ligand>
</feature>
<feature type="binding site" description="in other chain" evidence="1">
    <location>
        <begin position="204"/>
        <end position="205"/>
    </location>
    <ligand>
        <name>a purine D-ribonucleoside</name>
        <dbReference type="ChEBI" id="CHEBI:142355"/>
        <note>ligand shared between dimeric partners</note>
    </ligand>
</feature>
<feature type="site" description="Important for catalytic activity" evidence="2">
    <location>
        <position position="218"/>
    </location>
</feature>
<protein>
    <recommendedName>
        <fullName evidence="2">Purine nucleoside phosphorylase DeoD-type</fullName>
        <shortName evidence="2">PNP</shortName>
        <ecNumber evidence="2">2.4.2.1</ecNumber>
    </recommendedName>
</protein>
<accession>A3QGT0</accession>